<name>PLSX_BACC2</name>
<organism>
    <name type="scientific">Bacillus cereus (strain G9842)</name>
    <dbReference type="NCBI Taxonomy" id="405531"/>
    <lineage>
        <taxon>Bacteria</taxon>
        <taxon>Bacillati</taxon>
        <taxon>Bacillota</taxon>
        <taxon>Bacilli</taxon>
        <taxon>Bacillales</taxon>
        <taxon>Bacillaceae</taxon>
        <taxon>Bacillus</taxon>
        <taxon>Bacillus cereus group</taxon>
    </lineage>
</organism>
<proteinExistence type="inferred from homology"/>
<comment type="function">
    <text evidence="1">Catalyzes the reversible formation of acyl-phosphate (acyl-PO(4)) from acyl-[acyl-carrier-protein] (acyl-ACP). This enzyme utilizes acyl-ACP as fatty acyl donor, but not acyl-CoA.</text>
</comment>
<comment type="catalytic activity">
    <reaction evidence="1">
        <text>a fatty acyl-[ACP] + phosphate = an acyl phosphate + holo-[ACP]</text>
        <dbReference type="Rhea" id="RHEA:42292"/>
        <dbReference type="Rhea" id="RHEA-COMP:9685"/>
        <dbReference type="Rhea" id="RHEA-COMP:14125"/>
        <dbReference type="ChEBI" id="CHEBI:43474"/>
        <dbReference type="ChEBI" id="CHEBI:59918"/>
        <dbReference type="ChEBI" id="CHEBI:64479"/>
        <dbReference type="ChEBI" id="CHEBI:138651"/>
        <dbReference type="EC" id="2.3.1.274"/>
    </reaction>
</comment>
<comment type="pathway">
    <text evidence="1">Lipid metabolism; phospholipid metabolism.</text>
</comment>
<comment type="subunit">
    <text evidence="1">Homodimer. Probably interacts with PlsY.</text>
</comment>
<comment type="subcellular location">
    <subcellularLocation>
        <location evidence="1">Cytoplasm</location>
    </subcellularLocation>
    <text evidence="1">Associated with the membrane possibly through PlsY.</text>
</comment>
<comment type="similarity">
    <text evidence="1">Belongs to the PlsX family.</text>
</comment>
<dbReference type="EC" id="2.3.1.274" evidence="1"/>
<dbReference type="EMBL" id="CP001186">
    <property type="protein sequence ID" value="ACK96897.1"/>
    <property type="molecule type" value="Genomic_DNA"/>
</dbReference>
<dbReference type="RefSeq" id="WP_000684100.1">
    <property type="nucleotide sequence ID" value="NC_011772.1"/>
</dbReference>
<dbReference type="SMR" id="B7IUL2"/>
<dbReference type="KEGG" id="bcg:BCG9842_B1291"/>
<dbReference type="HOGENOM" id="CLU_039379_1_1_9"/>
<dbReference type="UniPathway" id="UPA00085"/>
<dbReference type="Proteomes" id="UP000006744">
    <property type="component" value="Chromosome"/>
</dbReference>
<dbReference type="GO" id="GO:0005737">
    <property type="term" value="C:cytoplasm"/>
    <property type="evidence" value="ECO:0007669"/>
    <property type="project" value="UniProtKB-SubCell"/>
</dbReference>
<dbReference type="GO" id="GO:0043811">
    <property type="term" value="F:phosphate:acyl-[acyl carrier protein] acyltransferase activity"/>
    <property type="evidence" value="ECO:0007669"/>
    <property type="project" value="UniProtKB-UniRule"/>
</dbReference>
<dbReference type="GO" id="GO:0006633">
    <property type="term" value="P:fatty acid biosynthetic process"/>
    <property type="evidence" value="ECO:0007669"/>
    <property type="project" value="UniProtKB-UniRule"/>
</dbReference>
<dbReference type="GO" id="GO:0008654">
    <property type="term" value="P:phospholipid biosynthetic process"/>
    <property type="evidence" value="ECO:0007669"/>
    <property type="project" value="UniProtKB-KW"/>
</dbReference>
<dbReference type="Gene3D" id="3.40.718.10">
    <property type="entry name" value="Isopropylmalate Dehydrogenase"/>
    <property type="match status" value="1"/>
</dbReference>
<dbReference type="HAMAP" id="MF_00019">
    <property type="entry name" value="PlsX"/>
    <property type="match status" value="1"/>
</dbReference>
<dbReference type="InterPro" id="IPR003664">
    <property type="entry name" value="FA_synthesis"/>
</dbReference>
<dbReference type="InterPro" id="IPR012281">
    <property type="entry name" value="Phospholipid_synth_PlsX-like"/>
</dbReference>
<dbReference type="NCBIfam" id="TIGR00182">
    <property type="entry name" value="plsX"/>
    <property type="match status" value="1"/>
</dbReference>
<dbReference type="PANTHER" id="PTHR30100">
    <property type="entry name" value="FATTY ACID/PHOSPHOLIPID SYNTHESIS PROTEIN PLSX"/>
    <property type="match status" value="1"/>
</dbReference>
<dbReference type="PANTHER" id="PTHR30100:SF1">
    <property type="entry name" value="PHOSPHATE ACYLTRANSFERASE"/>
    <property type="match status" value="1"/>
</dbReference>
<dbReference type="Pfam" id="PF02504">
    <property type="entry name" value="FA_synthesis"/>
    <property type="match status" value="1"/>
</dbReference>
<dbReference type="PIRSF" id="PIRSF002465">
    <property type="entry name" value="Phsphlp_syn_PlsX"/>
    <property type="match status" value="1"/>
</dbReference>
<dbReference type="SUPFAM" id="SSF53659">
    <property type="entry name" value="Isocitrate/Isopropylmalate dehydrogenase-like"/>
    <property type="match status" value="1"/>
</dbReference>
<protein>
    <recommendedName>
        <fullName evidence="1">Phosphate acyltransferase</fullName>
        <ecNumber evidence="1">2.3.1.274</ecNumber>
    </recommendedName>
    <alternativeName>
        <fullName evidence="1">Acyl-ACP phosphotransacylase</fullName>
    </alternativeName>
    <alternativeName>
        <fullName evidence="1">Acyl-[acyl-carrier-protein]--phosphate acyltransferase</fullName>
    </alternativeName>
    <alternativeName>
        <fullName evidence="1">Phosphate-acyl-ACP acyltransferase</fullName>
    </alternativeName>
</protein>
<evidence type="ECO:0000255" key="1">
    <source>
        <dbReference type="HAMAP-Rule" id="MF_00019"/>
    </source>
</evidence>
<reference key="1">
    <citation type="submission" date="2008-10" db="EMBL/GenBank/DDBJ databases">
        <title>Genome sequence of Bacillus cereus G9842.</title>
        <authorList>
            <person name="Dodson R.J."/>
            <person name="Durkin A.S."/>
            <person name="Rosovitz M.J."/>
            <person name="Rasko D.A."/>
            <person name="Hoffmaster A."/>
            <person name="Ravel J."/>
            <person name="Sutton G."/>
        </authorList>
    </citation>
    <scope>NUCLEOTIDE SEQUENCE [LARGE SCALE GENOMIC DNA]</scope>
    <source>
        <strain>G9842</strain>
    </source>
</reference>
<gene>
    <name evidence="1" type="primary">plsX</name>
    <name type="ordered locus">BCG9842_B1291</name>
</gene>
<sequence length="330" mass="35422">MKIAIDAMGGDHAPKAVVLGAMKAIKEYSDLHITLVGKEEEIRQYLTSDERITILHTDEKIESTEEPVRAVRRKKQASMVLAAQQVKDGEADACISAGSTGALMAAGLFVVGRMEGIERPALSPTMPTVDGKGFVMLDVGANVDAKPIHLYQYAVMGSVYAEKVRGIENPRVGLLNVGTEDGKGNELSKQVFAMLKDAPINFVGNVESRDLLQGVADVVVCDGFTGNVALKSLEGTALALFSMLKEQLMSSFTSKLAAAVLKPKLMVLKDKMDYSEYGGAALFGLKAPVIKAHGSSNDQSIFSAIRQTREMVAKEVIPTISSVMEKESLQ</sequence>
<accession>B7IUL2</accession>
<feature type="chain" id="PRO_1000116371" description="Phosphate acyltransferase">
    <location>
        <begin position="1"/>
        <end position="330"/>
    </location>
</feature>
<keyword id="KW-0963">Cytoplasm</keyword>
<keyword id="KW-0444">Lipid biosynthesis</keyword>
<keyword id="KW-0443">Lipid metabolism</keyword>
<keyword id="KW-0594">Phospholipid biosynthesis</keyword>
<keyword id="KW-1208">Phospholipid metabolism</keyword>
<keyword id="KW-0808">Transferase</keyword>